<gene>
    <name type="primary">krp1</name>
    <name type="synonym">krp</name>
    <name type="ORF">SPAC22E12.09c</name>
</gene>
<evidence type="ECO:0000250" key="1"/>
<evidence type="ECO:0000255" key="2"/>
<evidence type="ECO:0000255" key="3">
    <source>
        <dbReference type="PROSITE-ProRule" id="PRU01173"/>
    </source>
</evidence>
<evidence type="ECO:0000255" key="4">
    <source>
        <dbReference type="PROSITE-ProRule" id="PRU01240"/>
    </source>
</evidence>
<evidence type="ECO:0000269" key="5">
    <source>
    </source>
</evidence>
<evidence type="ECO:0000269" key="6">
    <source>
    </source>
</evidence>
<evidence type="ECO:0000305" key="7"/>
<feature type="signal peptide" evidence="2">
    <location>
        <begin position="1"/>
        <end position="22"/>
    </location>
</feature>
<feature type="propeptide" id="PRO_0000027046" evidence="2">
    <location>
        <begin position="23"/>
        <end position="82"/>
    </location>
</feature>
<feature type="propeptide" id="PRO_0000027047" evidence="2">
    <location>
        <begin position="83"/>
        <end position="102"/>
    </location>
</feature>
<feature type="chain" id="PRO_0000027048" description="Dibasic-processing endoprotease">
    <location>
        <begin position="103"/>
        <end position="709"/>
    </location>
</feature>
<feature type="topological domain" description="Lumenal" evidence="2">
    <location>
        <begin position="103"/>
        <end position="668"/>
    </location>
</feature>
<feature type="transmembrane region" description="Helical" evidence="2">
    <location>
        <begin position="669"/>
        <end position="693"/>
    </location>
</feature>
<feature type="topological domain" description="Cytoplasmic" evidence="2">
    <location>
        <begin position="694"/>
        <end position="709"/>
    </location>
</feature>
<feature type="domain" description="Peptidase S8" evidence="4">
    <location>
        <begin position="128"/>
        <end position="440"/>
    </location>
</feature>
<feature type="domain" description="P/Homo B" evidence="3">
    <location>
        <begin position="449"/>
        <end position="588"/>
    </location>
</feature>
<feature type="active site" description="Charge relay system" evidence="4">
    <location>
        <position position="162"/>
    </location>
</feature>
<feature type="active site" description="Charge relay system" evidence="4">
    <location>
        <position position="200"/>
    </location>
</feature>
<feature type="active site" description="Charge relay system" evidence="4">
    <location>
        <position position="371"/>
    </location>
</feature>
<feature type="glycosylation site" description="N-linked (GlcNAc...) asparagine" evidence="2">
    <location>
        <position position="155"/>
    </location>
</feature>
<feature type="glycosylation site" description="N-linked (GlcNAc...) asparagine" evidence="2">
    <location>
        <position position="463"/>
    </location>
</feature>
<feature type="glycosylation site" description="N-linked (GlcNAc...) asparagine" evidence="2">
    <location>
        <position position="471"/>
    </location>
</feature>
<feature type="glycosylation site" description="N-linked (GlcNAc...) asparagine" evidence="2">
    <location>
        <position position="620"/>
    </location>
</feature>
<feature type="disulfide bond" evidence="1">
    <location>
        <begin position="216"/>
        <end position="363"/>
    </location>
</feature>
<feature type="disulfide bond" evidence="1">
    <location>
        <begin position="308"/>
        <end position="338"/>
    </location>
</feature>
<feature type="mutagenesis site" description="In JY965; temperature-sensitive." evidence="5">
    <original>F</original>
    <variation>S</variation>
    <location>
        <position position="425"/>
    </location>
</feature>
<reference key="1">
    <citation type="journal article" date="1994" name="EMBO J.">
        <title>Isolation and characterization of krp, a dibasic endopeptidase required for cell viability in the fission yeast Schizosaccharomyces pombe.</title>
        <authorList>
            <person name="Davey J."/>
            <person name="Davis K."/>
            <person name="Imai Y."/>
            <person name="Yamamoto M."/>
            <person name="Matthews G."/>
        </authorList>
    </citation>
    <scope>NUCLEOTIDE SEQUENCE [GENOMIC DNA]</scope>
    <source>
        <strain>EG545</strain>
    </source>
</reference>
<reference key="2">
    <citation type="journal article" date="2002" name="Nature">
        <title>The genome sequence of Schizosaccharomyces pombe.</title>
        <authorList>
            <person name="Wood V."/>
            <person name="Gwilliam R."/>
            <person name="Rajandream M.A."/>
            <person name="Lyne M.H."/>
            <person name="Lyne R."/>
            <person name="Stewart A."/>
            <person name="Sgouros J.G."/>
            <person name="Peat N."/>
            <person name="Hayles J."/>
            <person name="Baker S.G."/>
            <person name="Basham D."/>
            <person name="Bowman S."/>
            <person name="Brooks K."/>
            <person name="Brown D."/>
            <person name="Brown S."/>
            <person name="Chillingworth T."/>
            <person name="Churcher C.M."/>
            <person name="Collins M."/>
            <person name="Connor R."/>
            <person name="Cronin A."/>
            <person name="Davis P."/>
            <person name="Feltwell T."/>
            <person name="Fraser A."/>
            <person name="Gentles S."/>
            <person name="Goble A."/>
            <person name="Hamlin N."/>
            <person name="Harris D.E."/>
            <person name="Hidalgo J."/>
            <person name="Hodgson G."/>
            <person name="Holroyd S."/>
            <person name="Hornsby T."/>
            <person name="Howarth S."/>
            <person name="Huckle E.J."/>
            <person name="Hunt S."/>
            <person name="Jagels K."/>
            <person name="James K.D."/>
            <person name="Jones L."/>
            <person name="Jones M."/>
            <person name="Leather S."/>
            <person name="McDonald S."/>
            <person name="McLean J."/>
            <person name="Mooney P."/>
            <person name="Moule S."/>
            <person name="Mungall K.L."/>
            <person name="Murphy L.D."/>
            <person name="Niblett D."/>
            <person name="Odell C."/>
            <person name="Oliver K."/>
            <person name="O'Neil S."/>
            <person name="Pearson D."/>
            <person name="Quail M.A."/>
            <person name="Rabbinowitsch E."/>
            <person name="Rutherford K.M."/>
            <person name="Rutter S."/>
            <person name="Saunders D."/>
            <person name="Seeger K."/>
            <person name="Sharp S."/>
            <person name="Skelton J."/>
            <person name="Simmonds M.N."/>
            <person name="Squares R."/>
            <person name="Squares S."/>
            <person name="Stevens K."/>
            <person name="Taylor K."/>
            <person name="Taylor R.G."/>
            <person name="Tivey A."/>
            <person name="Walsh S.V."/>
            <person name="Warren T."/>
            <person name="Whitehead S."/>
            <person name="Woodward J.R."/>
            <person name="Volckaert G."/>
            <person name="Aert R."/>
            <person name="Robben J."/>
            <person name="Grymonprez B."/>
            <person name="Weltjens I."/>
            <person name="Vanstreels E."/>
            <person name="Rieger M."/>
            <person name="Schaefer M."/>
            <person name="Mueller-Auer S."/>
            <person name="Gabel C."/>
            <person name="Fuchs M."/>
            <person name="Duesterhoeft A."/>
            <person name="Fritzc C."/>
            <person name="Holzer E."/>
            <person name="Moestl D."/>
            <person name="Hilbert H."/>
            <person name="Borzym K."/>
            <person name="Langer I."/>
            <person name="Beck A."/>
            <person name="Lehrach H."/>
            <person name="Reinhardt R."/>
            <person name="Pohl T.M."/>
            <person name="Eger P."/>
            <person name="Zimmermann W."/>
            <person name="Wedler H."/>
            <person name="Wambutt R."/>
            <person name="Purnelle B."/>
            <person name="Goffeau A."/>
            <person name="Cadieu E."/>
            <person name="Dreano S."/>
            <person name="Gloux S."/>
            <person name="Lelaure V."/>
            <person name="Mottier S."/>
            <person name="Galibert F."/>
            <person name="Aves S.J."/>
            <person name="Xiang Z."/>
            <person name="Hunt C."/>
            <person name="Moore K."/>
            <person name="Hurst S.M."/>
            <person name="Lucas M."/>
            <person name="Rochet M."/>
            <person name="Gaillardin C."/>
            <person name="Tallada V.A."/>
            <person name="Garzon A."/>
            <person name="Thode G."/>
            <person name="Daga R.R."/>
            <person name="Cruzado L."/>
            <person name="Jimenez J."/>
            <person name="Sanchez M."/>
            <person name="del Rey F."/>
            <person name="Benito J."/>
            <person name="Dominguez A."/>
            <person name="Revuelta J.L."/>
            <person name="Moreno S."/>
            <person name="Armstrong J."/>
            <person name="Forsburg S.L."/>
            <person name="Cerutti L."/>
            <person name="Lowe T."/>
            <person name="McCombie W.R."/>
            <person name="Paulsen I."/>
            <person name="Potashkin J."/>
            <person name="Shpakovski G.V."/>
            <person name="Ussery D."/>
            <person name="Barrell B.G."/>
            <person name="Nurse P."/>
        </authorList>
    </citation>
    <scope>NUCLEOTIDE SEQUENCE [LARGE SCALE GENOMIC DNA]</scope>
    <source>
        <strain>972 / ATCC 24843</strain>
    </source>
</reference>
<reference key="3">
    <citation type="journal article" date="2000" name="Mol. Microbiol.">
        <title>Identification of proteases with shared functions to the proprotein processing protease Krp1 in the fission yeast Schizosaccharomyces pombe.</title>
        <authorList>
            <person name="Ladds G."/>
            <person name="Davey J."/>
        </authorList>
    </citation>
    <scope>FUNCTION</scope>
    <scope>MUTAGENESIS OF PHE-425</scope>
</reference>
<reference key="4">
    <citation type="journal article" date="2006" name="Nat. Biotechnol.">
        <title>ORFeome cloning and global analysis of protein localization in the fission yeast Schizosaccharomyces pombe.</title>
        <authorList>
            <person name="Matsuyama A."/>
            <person name="Arai R."/>
            <person name="Yashiroda Y."/>
            <person name="Shirai A."/>
            <person name="Kamata A."/>
            <person name="Sekido S."/>
            <person name="Kobayashi Y."/>
            <person name="Hashimoto A."/>
            <person name="Hamamoto M."/>
            <person name="Hiraoka Y."/>
            <person name="Horinouchi S."/>
            <person name="Yoshida M."/>
        </authorList>
    </citation>
    <scope>SUBCELLULAR LOCATION [LARGE SCALE ANALYSIS]</scope>
</reference>
<sequence length="709" mass="78127">MHPALLCGPILAIFLQFLVSSCSPLENDDLFLVQVEPEVDPVVAAEAIGAKYVRPLLNLKYHHLIKLHKGSDDSVQSSIRKRGIDAGILELERQTPRWRYKRDASESDELLNEFSNHFGISDPLFYGQWHIFNSNNPGHDLNLREVWDAGYFGENVTVAFVDDGIDFKHPDLQAAYTSLGSWDFNDNIADPLPKLSDDQHGTRCAGEVAAAWNDVCGVGIAPRAKVAGLRILSAPITDAVESEALNYGFQTNHIYSCSWGPADDGRAMDAPNTATRRALMNGVLNGRNGLGSIFVFASGNGGHYHDNCNFDGYTNSIFSATIGAVDAEHKIPFYSEVCAAQLVSAYSSGSHLSILTTNPEGTCTRSHGGTSAAAPLASAVYALALSIRPDLSWRDIQHITVYSASPFDSPSQNAEWQKTPAGFQFSHHFGFGKLDASKFVEVAKDWQVVNPQTWLIAPEINVNKSFGSVNNETITEMVSEFTVTKDMIEKSNFKRLEHVTVRVCIPFNRRGALEILLESPSGIRSILASERPYDENSKGFLDWTFMTVQHWAEPPEGVWKLLVNDRSGGKHEGTFENWQLALWGESENPSNTAPLPYDTLELPKEMVLGIYSEPNSDLTNSSTLLSPTSTSFTSYTVSATATPTSTSHIPIPTVLPPTQPVLEPSYREIVAFITFFLLFAFIFVAVIWTWISAFWKAKAPPPLSQQEIA</sequence>
<name>KRP1_SCHPO</name>
<dbReference type="EC" id="3.4.21.-"/>
<dbReference type="EMBL" id="X82435">
    <property type="protein sequence ID" value="CAA57818.1"/>
    <property type="molecule type" value="Genomic_DNA"/>
</dbReference>
<dbReference type="EMBL" id="CU329670">
    <property type="protein sequence ID" value="CAA93896.1"/>
    <property type="molecule type" value="Genomic_DNA"/>
</dbReference>
<dbReference type="PIR" id="S51793">
    <property type="entry name" value="S51793"/>
</dbReference>
<dbReference type="RefSeq" id="NP_594835.1">
    <property type="nucleotide sequence ID" value="NM_001020264.2"/>
</dbReference>
<dbReference type="SMR" id="Q09175"/>
<dbReference type="BioGRID" id="279032">
    <property type="interactions" value="5"/>
</dbReference>
<dbReference type="FunCoup" id="Q09175">
    <property type="interactions" value="58"/>
</dbReference>
<dbReference type="STRING" id="284812.Q09175"/>
<dbReference type="MEROPS" id="S08.A55"/>
<dbReference type="GlyCosmos" id="Q09175">
    <property type="glycosylation" value="4 sites, No reported glycans"/>
</dbReference>
<dbReference type="iPTMnet" id="Q09175"/>
<dbReference type="PaxDb" id="4896-SPAC22E12.09c.1"/>
<dbReference type="EnsemblFungi" id="SPAC22E12.09c.1">
    <property type="protein sequence ID" value="SPAC22E12.09c.1:pep"/>
    <property type="gene ID" value="SPAC22E12.09c"/>
</dbReference>
<dbReference type="GeneID" id="2542576"/>
<dbReference type="KEGG" id="spo:2542576"/>
<dbReference type="PomBase" id="SPAC22E12.09c">
    <property type="gene designation" value="krp1"/>
</dbReference>
<dbReference type="VEuPathDB" id="FungiDB:SPAC22E12.09c"/>
<dbReference type="eggNOG" id="KOG3525">
    <property type="taxonomic scope" value="Eukaryota"/>
</dbReference>
<dbReference type="HOGENOM" id="CLU_002976_2_1_1"/>
<dbReference type="InParanoid" id="Q09175"/>
<dbReference type="OMA" id="LAKQWHS"/>
<dbReference type="PhylomeDB" id="Q09175"/>
<dbReference type="Reactome" id="R-SPO-2173796">
    <property type="pathway name" value="SMAD2/SMAD3:SMAD4 heterotrimer regulates transcription"/>
</dbReference>
<dbReference type="PRO" id="PR:Q09175"/>
<dbReference type="Proteomes" id="UP000002485">
    <property type="component" value="Chromosome I"/>
</dbReference>
<dbReference type="GO" id="GO:0009986">
    <property type="term" value="C:cell surface"/>
    <property type="evidence" value="ECO:0000303"/>
    <property type="project" value="PomBase"/>
</dbReference>
<dbReference type="GO" id="GO:0005794">
    <property type="term" value="C:Golgi apparatus"/>
    <property type="evidence" value="ECO:0000314"/>
    <property type="project" value="PomBase"/>
</dbReference>
<dbReference type="GO" id="GO:0000139">
    <property type="term" value="C:Golgi membrane"/>
    <property type="evidence" value="ECO:0000318"/>
    <property type="project" value="GO_Central"/>
</dbReference>
<dbReference type="GO" id="GO:0016020">
    <property type="term" value="C:membrane"/>
    <property type="evidence" value="ECO:0000314"/>
    <property type="project" value="PomBase"/>
</dbReference>
<dbReference type="GO" id="GO:0005802">
    <property type="term" value="C:trans-Golgi network"/>
    <property type="evidence" value="ECO:0000318"/>
    <property type="project" value="GO_Central"/>
</dbReference>
<dbReference type="GO" id="GO:0004175">
    <property type="term" value="F:endopeptidase activity"/>
    <property type="evidence" value="ECO:0000314"/>
    <property type="project" value="PomBase"/>
</dbReference>
<dbReference type="GO" id="GO:0004252">
    <property type="term" value="F:serine-type endopeptidase activity"/>
    <property type="evidence" value="ECO:0000314"/>
    <property type="project" value="PomBase"/>
</dbReference>
<dbReference type="GO" id="GO:0004867">
    <property type="term" value="F:serine-type endopeptidase inhibitor activity"/>
    <property type="evidence" value="ECO:0000315"/>
    <property type="project" value="PomBase"/>
</dbReference>
<dbReference type="GO" id="GO:0071432">
    <property type="term" value="P:peptide mating pheromone maturation involved in positive regulation of conjugation with cellular fusion"/>
    <property type="evidence" value="ECO:0000269"/>
    <property type="project" value="PomBase"/>
</dbReference>
<dbReference type="GO" id="GO:0016485">
    <property type="term" value="P:protein processing"/>
    <property type="evidence" value="ECO:0000314"/>
    <property type="project" value="PomBase"/>
</dbReference>
<dbReference type="CDD" id="cd04059">
    <property type="entry name" value="Peptidases_S8_Protein_convertases_Kexins_Furin-like"/>
    <property type="match status" value="1"/>
</dbReference>
<dbReference type="FunFam" id="3.40.50.200:FF:000005">
    <property type="entry name" value="Proprotein convertase subtilisin/kexin type 7"/>
    <property type="match status" value="1"/>
</dbReference>
<dbReference type="FunFam" id="2.60.120.260:FF:000026">
    <property type="entry name" value="proprotein convertase subtilisin/kexin type 7"/>
    <property type="match status" value="1"/>
</dbReference>
<dbReference type="Gene3D" id="2.60.120.260">
    <property type="entry name" value="Galactose-binding domain-like"/>
    <property type="match status" value="1"/>
</dbReference>
<dbReference type="Gene3D" id="3.40.50.200">
    <property type="entry name" value="Peptidase S8/S53 domain"/>
    <property type="match status" value="1"/>
</dbReference>
<dbReference type="InterPro" id="IPR008979">
    <property type="entry name" value="Galactose-bd-like_sf"/>
</dbReference>
<dbReference type="InterPro" id="IPR034182">
    <property type="entry name" value="Kexin/furin"/>
</dbReference>
<dbReference type="InterPro" id="IPR002884">
    <property type="entry name" value="P_dom"/>
</dbReference>
<dbReference type="InterPro" id="IPR000209">
    <property type="entry name" value="Peptidase_S8/S53_dom"/>
</dbReference>
<dbReference type="InterPro" id="IPR036852">
    <property type="entry name" value="Peptidase_S8/S53_dom_sf"/>
</dbReference>
<dbReference type="InterPro" id="IPR023827">
    <property type="entry name" value="Peptidase_S8_Asp-AS"/>
</dbReference>
<dbReference type="InterPro" id="IPR022398">
    <property type="entry name" value="Peptidase_S8_His-AS"/>
</dbReference>
<dbReference type="InterPro" id="IPR023828">
    <property type="entry name" value="Peptidase_S8_Ser-AS"/>
</dbReference>
<dbReference type="InterPro" id="IPR015500">
    <property type="entry name" value="Peptidase_S8_subtilisin-rel"/>
</dbReference>
<dbReference type="PANTHER" id="PTHR42884:SF14">
    <property type="entry name" value="NEUROENDOCRINE CONVERTASE 1"/>
    <property type="match status" value="1"/>
</dbReference>
<dbReference type="PANTHER" id="PTHR42884">
    <property type="entry name" value="PROPROTEIN CONVERTASE SUBTILISIN/KEXIN-RELATED"/>
    <property type="match status" value="1"/>
</dbReference>
<dbReference type="Pfam" id="PF01483">
    <property type="entry name" value="P_proprotein"/>
    <property type="match status" value="1"/>
</dbReference>
<dbReference type="Pfam" id="PF00082">
    <property type="entry name" value="Peptidase_S8"/>
    <property type="match status" value="1"/>
</dbReference>
<dbReference type="PRINTS" id="PR00723">
    <property type="entry name" value="SUBTILISIN"/>
</dbReference>
<dbReference type="SUPFAM" id="SSF49785">
    <property type="entry name" value="Galactose-binding domain-like"/>
    <property type="match status" value="1"/>
</dbReference>
<dbReference type="SUPFAM" id="SSF52743">
    <property type="entry name" value="Subtilisin-like"/>
    <property type="match status" value="1"/>
</dbReference>
<dbReference type="PROSITE" id="PS51829">
    <property type="entry name" value="P_HOMO_B"/>
    <property type="match status" value="1"/>
</dbReference>
<dbReference type="PROSITE" id="PS51892">
    <property type="entry name" value="SUBTILASE"/>
    <property type="match status" value="1"/>
</dbReference>
<dbReference type="PROSITE" id="PS00136">
    <property type="entry name" value="SUBTILASE_ASP"/>
    <property type="match status" value="1"/>
</dbReference>
<dbReference type="PROSITE" id="PS00137">
    <property type="entry name" value="SUBTILASE_HIS"/>
    <property type="match status" value="1"/>
</dbReference>
<dbReference type="PROSITE" id="PS00138">
    <property type="entry name" value="SUBTILASE_SER"/>
    <property type="match status" value="1"/>
</dbReference>
<keyword id="KW-0106">Calcium</keyword>
<keyword id="KW-0165">Cleavage on pair of basic residues</keyword>
<keyword id="KW-1015">Disulfide bond</keyword>
<keyword id="KW-0325">Glycoprotein</keyword>
<keyword id="KW-0333">Golgi apparatus</keyword>
<keyword id="KW-0378">Hydrolase</keyword>
<keyword id="KW-0472">Membrane</keyword>
<keyword id="KW-0645">Protease</keyword>
<keyword id="KW-1185">Reference proteome</keyword>
<keyword id="KW-0720">Serine protease</keyword>
<keyword id="KW-0732">Signal</keyword>
<keyword id="KW-0812">Transmembrane</keyword>
<keyword id="KW-1133">Transmembrane helix</keyword>
<keyword id="KW-0865">Zymogen</keyword>
<protein>
    <recommendedName>
        <fullName>Dibasic-processing endoprotease</fullName>
        <ecNumber>3.4.21.-</ecNumber>
    </recommendedName>
    <alternativeName>
        <fullName>KEX2-related protease</fullName>
    </alternativeName>
</protein>
<accession>Q09175</accession>
<comment type="function">
    <text evidence="5">Membrane-bound, subtilisin-like serine protease that processes the P-factor precursor and other precursor proteins. Essential for cell viability. Cleaves substrate on the C-terminal side of dibasic residues.</text>
</comment>
<comment type="cofactor">
    <cofactor>
        <name>Ca(2+)</name>
        <dbReference type="ChEBI" id="CHEBI:29108"/>
    </cofactor>
</comment>
<comment type="subcellular location">
    <subcellularLocation>
        <location evidence="6">Golgi apparatus</location>
        <location evidence="6">trans-Golgi network membrane</location>
        <topology evidence="6">Single-pass type I membrane protein</topology>
    </subcellularLocation>
</comment>
<comment type="PTM">
    <text>N-glycosylated.</text>
</comment>
<comment type="similarity">
    <text evidence="7">Belongs to the peptidase S8 family. Furin subfamily.</text>
</comment>
<proteinExistence type="evidence at protein level"/>
<organism>
    <name type="scientific">Schizosaccharomyces pombe (strain 972 / ATCC 24843)</name>
    <name type="common">Fission yeast</name>
    <dbReference type="NCBI Taxonomy" id="284812"/>
    <lineage>
        <taxon>Eukaryota</taxon>
        <taxon>Fungi</taxon>
        <taxon>Dikarya</taxon>
        <taxon>Ascomycota</taxon>
        <taxon>Taphrinomycotina</taxon>
        <taxon>Schizosaccharomycetes</taxon>
        <taxon>Schizosaccharomycetales</taxon>
        <taxon>Schizosaccharomycetaceae</taxon>
        <taxon>Schizosaccharomyces</taxon>
    </lineage>
</organism>